<organism>
    <name type="scientific">Aquifex aeolicus (strain VF5)</name>
    <dbReference type="NCBI Taxonomy" id="224324"/>
    <lineage>
        <taxon>Bacteria</taxon>
        <taxon>Pseudomonadati</taxon>
        <taxon>Aquificota</taxon>
        <taxon>Aquificia</taxon>
        <taxon>Aquificales</taxon>
        <taxon>Aquificaceae</taxon>
        <taxon>Aquifex</taxon>
    </lineage>
</organism>
<accession>O67857</accession>
<keyword id="KW-0028">Amino-acid biosynthesis</keyword>
<keyword id="KW-0032">Aminotransferase</keyword>
<keyword id="KW-0368">Histidine biosynthesis</keyword>
<keyword id="KW-0663">Pyridoxal phosphate</keyword>
<keyword id="KW-1185">Reference proteome</keyword>
<keyword id="KW-0808">Transferase</keyword>
<reference key="1">
    <citation type="journal article" date="1998" name="Nature">
        <title>The complete genome of the hyperthermophilic bacterium Aquifex aeolicus.</title>
        <authorList>
            <person name="Deckert G."/>
            <person name="Warren P.V."/>
            <person name="Gaasterland T."/>
            <person name="Young W.G."/>
            <person name="Lenox A.L."/>
            <person name="Graham D.E."/>
            <person name="Overbeek R."/>
            <person name="Snead M.A."/>
            <person name="Keller M."/>
            <person name="Aujay M."/>
            <person name="Huber R."/>
            <person name="Feldman R.A."/>
            <person name="Short J.M."/>
            <person name="Olsen G.J."/>
            <person name="Swanson R.V."/>
        </authorList>
    </citation>
    <scope>NUCLEOTIDE SEQUENCE [LARGE SCALE GENOMIC DNA]</scope>
    <source>
        <strain>VF5</strain>
    </source>
</reference>
<evidence type="ECO:0000255" key="1">
    <source>
        <dbReference type="HAMAP-Rule" id="MF_01023"/>
    </source>
</evidence>
<dbReference type="EC" id="2.6.1.9" evidence="1"/>
<dbReference type="EMBL" id="AE000657">
    <property type="protein sequence ID" value="AAC07813.1"/>
    <property type="molecule type" value="Genomic_DNA"/>
</dbReference>
<dbReference type="PIR" id="E70478">
    <property type="entry name" value="E70478"/>
</dbReference>
<dbReference type="RefSeq" id="NP_214426.1">
    <property type="nucleotide sequence ID" value="NC_000918.1"/>
</dbReference>
<dbReference type="RefSeq" id="WP_010881362.1">
    <property type="nucleotide sequence ID" value="NC_000918.1"/>
</dbReference>
<dbReference type="SMR" id="O67857"/>
<dbReference type="FunCoup" id="O67857">
    <property type="interactions" value="401"/>
</dbReference>
<dbReference type="STRING" id="224324.aq_2084"/>
<dbReference type="EnsemblBacteria" id="AAC07813">
    <property type="protein sequence ID" value="AAC07813"/>
    <property type="gene ID" value="aq_2084"/>
</dbReference>
<dbReference type="KEGG" id="aae:aq_2084"/>
<dbReference type="eggNOG" id="COG0079">
    <property type="taxonomic scope" value="Bacteria"/>
</dbReference>
<dbReference type="HOGENOM" id="CLU_017584_3_1_0"/>
<dbReference type="InParanoid" id="O67857"/>
<dbReference type="OrthoDB" id="9813612at2"/>
<dbReference type="UniPathway" id="UPA00031">
    <property type="reaction ID" value="UER00012"/>
</dbReference>
<dbReference type="Proteomes" id="UP000000798">
    <property type="component" value="Chromosome"/>
</dbReference>
<dbReference type="GO" id="GO:0004400">
    <property type="term" value="F:histidinol-phosphate transaminase activity"/>
    <property type="evidence" value="ECO:0007669"/>
    <property type="project" value="UniProtKB-UniRule"/>
</dbReference>
<dbReference type="GO" id="GO:0030170">
    <property type="term" value="F:pyridoxal phosphate binding"/>
    <property type="evidence" value="ECO:0007669"/>
    <property type="project" value="InterPro"/>
</dbReference>
<dbReference type="GO" id="GO:0000105">
    <property type="term" value="P:L-histidine biosynthetic process"/>
    <property type="evidence" value="ECO:0007669"/>
    <property type="project" value="UniProtKB-UniRule"/>
</dbReference>
<dbReference type="CDD" id="cd00609">
    <property type="entry name" value="AAT_like"/>
    <property type="match status" value="1"/>
</dbReference>
<dbReference type="Gene3D" id="3.90.1150.10">
    <property type="entry name" value="Aspartate Aminotransferase, domain 1"/>
    <property type="match status" value="1"/>
</dbReference>
<dbReference type="Gene3D" id="3.40.640.10">
    <property type="entry name" value="Type I PLP-dependent aspartate aminotransferase-like (Major domain)"/>
    <property type="match status" value="1"/>
</dbReference>
<dbReference type="HAMAP" id="MF_01023">
    <property type="entry name" value="HisC_aminotrans_2"/>
    <property type="match status" value="1"/>
</dbReference>
<dbReference type="InterPro" id="IPR004839">
    <property type="entry name" value="Aminotransferase_I/II_large"/>
</dbReference>
<dbReference type="InterPro" id="IPR005861">
    <property type="entry name" value="HisP_aminotrans"/>
</dbReference>
<dbReference type="InterPro" id="IPR050106">
    <property type="entry name" value="HistidinolP_aminotransfase"/>
</dbReference>
<dbReference type="InterPro" id="IPR015424">
    <property type="entry name" value="PyrdxlP-dep_Trfase"/>
</dbReference>
<dbReference type="InterPro" id="IPR015421">
    <property type="entry name" value="PyrdxlP-dep_Trfase_major"/>
</dbReference>
<dbReference type="InterPro" id="IPR015422">
    <property type="entry name" value="PyrdxlP-dep_Trfase_small"/>
</dbReference>
<dbReference type="NCBIfam" id="TIGR01141">
    <property type="entry name" value="hisC"/>
    <property type="match status" value="1"/>
</dbReference>
<dbReference type="PANTHER" id="PTHR43643:SF6">
    <property type="entry name" value="HISTIDINOL-PHOSPHATE AMINOTRANSFERASE"/>
    <property type="match status" value="1"/>
</dbReference>
<dbReference type="PANTHER" id="PTHR43643">
    <property type="entry name" value="HISTIDINOL-PHOSPHATE AMINOTRANSFERASE 2"/>
    <property type="match status" value="1"/>
</dbReference>
<dbReference type="Pfam" id="PF00155">
    <property type="entry name" value="Aminotran_1_2"/>
    <property type="match status" value="1"/>
</dbReference>
<dbReference type="SUPFAM" id="SSF53383">
    <property type="entry name" value="PLP-dependent transferases"/>
    <property type="match status" value="1"/>
</dbReference>
<name>HIS8_AQUAE</name>
<proteinExistence type="inferred from homology"/>
<gene>
    <name evidence="1" type="primary">hisC</name>
    <name type="ordered locus">aq_2084</name>
</gene>
<comment type="catalytic activity">
    <reaction evidence="1">
        <text>L-histidinol phosphate + 2-oxoglutarate = 3-(imidazol-4-yl)-2-oxopropyl phosphate + L-glutamate</text>
        <dbReference type="Rhea" id="RHEA:23744"/>
        <dbReference type="ChEBI" id="CHEBI:16810"/>
        <dbReference type="ChEBI" id="CHEBI:29985"/>
        <dbReference type="ChEBI" id="CHEBI:57766"/>
        <dbReference type="ChEBI" id="CHEBI:57980"/>
        <dbReference type="EC" id="2.6.1.9"/>
    </reaction>
</comment>
<comment type="cofactor">
    <cofactor evidence="1">
        <name>pyridoxal 5'-phosphate</name>
        <dbReference type="ChEBI" id="CHEBI:597326"/>
    </cofactor>
</comment>
<comment type="pathway">
    <text evidence="1">Amino-acid biosynthesis; L-histidine biosynthesis; L-histidine from 5-phospho-alpha-D-ribose 1-diphosphate: step 7/9.</text>
</comment>
<comment type="subunit">
    <text evidence="1">Homodimer.</text>
</comment>
<comment type="similarity">
    <text evidence="1">Belongs to the class-II pyridoxal-phosphate-dependent aminotransferase family. Histidinol-phosphate aminotransferase subfamily.</text>
</comment>
<sequence length="354" mass="40669">MIPQRIKELEAYKTEVTPASVRLSSNEFPYDFPEEIKQRALEELKKVPLNKYPDPEAKELKAVLADFFGVKEENLVLGNGSDELIYYLSIAIGELYIPVYIPVPTFPMYEISAKVLGRPLVKVQLDENFDIDLERSIELIEKEKPVLGYFAYPNNPTGNLFSRGKIEEIRNRGVFCVIDEAYYHYSGETFLEDALKREDTVVLRTLSKIGMASLRVGILIGKGEIVSEINKVRLPFNVTYPSQVMAKVLLTEGREFLMEKIQEVVKERERMYDEMKKIEGVEVFPSKANFLLFRTPYPAHEVYQELLKRDVLVRNVSYMEGLQKCLRVSVGKPEENNKFLEALEESIKSLSSSL</sequence>
<feature type="chain" id="PRO_0000153295" description="Histidinol-phosphate aminotransferase">
    <location>
        <begin position="1"/>
        <end position="354"/>
    </location>
</feature>
<feature type="modified residue" description="N6-(pyridoxal phosphate)lysine" evidence="1">
    <location>
        <position position="208"/>
    </location>
</feature>
<protein>
    <recommendedName>
        <fullName evidence="1">Histidinol-phosphate aminotransferase</fullName>
        <ecNumber evidence="1">2.6.1.9</ecNumber>
    </recommendedName>
    <alternativeName>
        <fullName evidence="1">Imidazole acetol-phosphate transaminase</fullName>
    </alternativeName>
</protein>